<dbReference type="EMBL" id="U46933">
    <property type="protein sequence ID" value="AAC54918.1"/>
    <property type="molecule type" value="Genomic_DNA"/>
</dbReference>
<dbReference type="RefSeq" id="NP_043892.1">
    <property type="nucleotide sequence ID" value="NC_001720.1"/>
</dbReference>
<dbReference type="PDB" id="2VTW">
    <property type="method" value="X-ray"/>
    <property type="resolution" value="2.00 A"/>
    <property type="chains" value="A/B/C/D/E/F=206-410"/>
</dbReference>
<dbReference type="PDBsum" id="2VTW"/>
<dbReference type="SMR" id="Q64762"/>
<dbReference type="GeneID" id="1476564"/>
<dbReference type="EvolutionaryTrace" id="Q64762"/>
<dbReference type="Proteomes" id="UP000001594">
    <property type="component" value="Segment"/>
</dbReference>
<dbReference type="GO" id="GO:0042025">
    <property type="term" value="C:host cell nucleus"/>
    <property type="evidence" value="ECO:0007669"/>
    <property type="project" value="UniProtKB-SubCell"/>
</dbReference>
<dbReference type="GO" id="GO:0019028">
    <property type="term" value="C:viral capsid"/>
    <property type="evidence" value="ECO:0007669"/>
    <property type="project" value="UniProtKB-KW"/>
</dbReference>
<dbReference type="GO" id="GO:0098671">
    <property type="term" value="P:adhesion receptor-mediated virion attachment to host cell"/>
    <property type="evidence" value="ECO:0007669"/>
    <property type="project" value="UniProtKB-KW"/>
</dbReference>
<dbReference type="GO" id="GO:0046718">
    <property type="term" value="P:symbiont entry into host cell"/>
    <property type="evidence" value="ECO:0007669"/>
    <property type="project" value="UniProtKB-KW"/>
</dbReference>
<dbReference type="Gene3D" id="2.60.90.30">
    <property type="entry name" value="Fiber protein 1, C-terminal domain"/>
    <property type="match status" value="1"/>
</dbReference>
<dbReference type="InterPro" id="IPR031822">
    <property type="entry name" value="AdHead_fibreRBD"/>
</dbReference>
<dbReference type="InterPro" id="IPR010537">
    <property type="entry name" value="Avian_adenovirus_fibre_N"/>
</dbReference>
<dbReference type="InterPro" id="IPR038486">
    <property type="entry name" value="Fiber_prot_C_sf"/>
</dbReference>
<dbReference type="Pfam" id="PF16812">
    <property type="entry name" value="AdHead_fibreRBD"/>
    <property type="match status" value="1"/>
</dbReference>
<dbReference type="Pfam" id="PF06536">
    <property type="entry name" value="Av_adeno_fibre"/>
    <property type="match status" value="2"/>
</dbReference>
<name>SPIK2_ADEG1</name>
<sequence>MADQKRKLADPDAEAPTGKMARAGPGELDLVYPFWYQVAAPTEITPPFLDPNGPLYSTDGLLNVRLTAPLVIIRQSNGNAIGVKTDGSITVNADGALQIGISTAGPLTTTANGIDLNIDPKTLVVDGSSGKNVLGVLLKGQGALQSSAQGIGVAVDESLQIVDNTLEVKVDAAGPLAVTAAGVGLQYDNTQFKVTNGTLQLYQAPTSSVAAFTSGTIGLSSPTGNFVSSSNNPFNGSYFLQQINTMGMLTTSLYVKVDTTTMGTRPTGAVNENARYFTVWVSSFLTQCNPSNIGQGTLEPSNISMTSFEPARNPISPPVFNMNQNIPYYASRFGVLESYRPIFTGSLNTGSIDVRMQVTPVLATNNTTYNLIAFTFQCASAGLFNPTVNGTVAIGPVVHTCPAARAPVTV</sequence>
<comment type="function">
    <text evidence="1">Forms spikes that protrude from each vertex of the icosahedral capsid. Interacts with host receptor to provide virion initial attachment to target cell. Fiber proteins are shed during virus entry, when virus is still at the cell surface (By similarity).</text>
</comment>
<comment type="subunit">
    <text evidence="1">Homotrimer. Interacts (via N-terminal tail region) with pentons (By similarity).</text>
</comment>
<comment type="subcellular location">
    <subcellularLocation>
        <location evidence="1">Virion</location>
    </subcellularLocation>
    <subcellularLocation>
        <location evidence="1">Host nucleus</location>
    </subcellularLocation>
    <text evidence="1">Anchored to the pentons, protrudes from the virion surface.</text>
</comment>
<comment type="induction">
    <text>Expressed in the late phase of the viral replicative cycle.</text>
</comment>
<comment type="domain">
    <text evidence="1">The tail region anchors the fiber to penton base capsomers, whereas the shaft, built from several repeated motifs, allows the knob to protrude from the virion.</text>
</comment>
<comment type="miscellaneous">
    <text evidence="1">All late proteins expressed from the major late promoter are produced by alternative splicing and alternative polyadenylation of the same gene giving rise to non-overlapping ORFs. A leader sequence is present in the N-terminus of all these mRNAs and is recognized by the viral shutoff protein to provide expression although conventional translation via ribosome scanning from the cap has been shut off in the host cell (By similarity).</text>
</comment>
<comment type="similarity">
    <text evidence="3">Belongs to the adenoviridae fiber family.</text>
</comment>
<reference key="1">
    <citation type="journal article" date="1996" name="J. Virol.">
        <title>The complete DNA sequence and genomic organization of the avian adenovirus CELO.</title>
        <authorList>
            <person name="Chiocca S."/>
            <person name="Kurzbauer R."/>
            <person name="Schaffner G."/>
            <person name="Baker A."/>
            <person name="Mautner V."/>
            <person name="Cotten M."/>
        </authorList>
    </citation>
    <scope>NUCLEOTIDE SEQUENCE [LARGE SCALE GENOMIC DNA]</scope>
</reference>
<protein>
    <recommendedName>
        <fullName>Fiber protein 2</fullName>
    </recommendedName>
</protein>
<keyword id="KW-0002">3D-structure</keyword>
<keyword id="KW-0167">Capsid protein</keyword>
<keyword id="KW-1048">Host nucleus</keyword>
<keyword id="KW-0945">Host-virus interaction</keyword>
<keyword id="KW-0426">Late protein</keyword>
<keyword id="KW-1185">Reference proteome</keyword>
<keyword id="KW-1233">Viral attachment to host adhesion receptor</keyword>
<keyword id="KW-1161">Viral attachment to host cell</keyword>
<keyword id="KW-0946">Virion</keyword>
<keyword id="KW-1160">Virus entry into host cell</keyword>
<organism>
    <name type="scientific">Fowl adenovirus A serotype 1 (strain CELO / Phelps)</name>
    <name type="common">FAdV-1</name>
    <name type="synonym">Avian adenovirus gal1 (strain Phelps)</name>
    <dbReference type="NCBI Taxonomy" id="10553"/>
    <lineage>
        <taxon>Viruses</taxon>
        <taxon>Varidnaviria</taxon>
        <taxon>Bamfordvirae</taxon>
        <taxon>Preplasmiviricota</taxon>
        <taxon>Tectiliviricetes</taxon>
        <taxon>Rowavirales</taxon>
        <taxon>Adenoviridae</taxon>
        <taxon>Aviadenovirus</taxon>
        <taxon>Fowl aviadenovirus A</taxon>
    </lineage>
</organism>
<feature type="chain" id="PRO_0000221809" description="Fiber protein 2">
    <location>
        <begin position="1"/>
        <end position="410"/>
    </location>
</feature>
<feature type="region of interest" description="Disordered" evidence="2">
    <location>
        <begin position="1"/>
        <end position="22"/>
    </location>
</feature>
<feature type="compositionally biased region" description="Basic and acidic residues" evidence="2">
    <location>
        <begin position="1"/>
        <end position="10"/>
    </location>
</feature>
<feature type="strand" evidence="4">
    <location>
        <begin position="208"/>
        <end position="215"/>
    </location>
</feature>
<feature type="strand" evidence="4">
    <location>
        <begin position="224"/>
        <end position="228"/>
    </location>
</feature>
<feature type="strand" evidence="4">
    <location>
        <begin position="233"/>
        <end position="245"/>
    </location>
</feature>
<feature type="strand" evidence="4">
    <location>
        <begin position="248"/>
        <end position="258"/>
    </location>
</feature>
<feature type="turn" evidence="4">
    <location>
        <begin position="259"/>
        <end position="261"/>
    </location>
</feature>
<feature type="helix" evidence="4">
    <location>
        <begin position="269"/>
        <end position="272"/>
    </location>
</feature>
<feature type="strand" evidence="4">
    <location>
        <begin position="276"/>
        <end position="281"/>
    </location>
</feature>
<feature type="turn" evidence="4">
    <location>
        <begin position="285"/>
        <end position="287"/>
    </location>
</feature>
<feature type="strand" evidence="4">
    <location>
        <begin position="297"/>
        <end position="300"/>
    </location>
</feature>
<feature type="helix" evidence="4">
    <location>
        <begin position="305"/>
        <end position="308"/>
    </location>
</feature>
<feature type="helix" evidence="4">
    <location>
        <begin position="322"/>
        <end position="324"/>
    </location>
</feature>
<feature type="strand" evidence="4">
    <location>
        <begin position="333"/>
        <end position="340"/>
    </location>
</feature>
<feature type="strand" evidence="4">
    <location>
        <begin position="342"/>
        <end position="345"/>
    </location>
</feature>
<feature type="strand" evidence="4">
    <location>
        <begin position="352"/>
        <end position="362"/>
    </location>
</feature>
<feature type="strand" evidence="4">
    <location>
        <begin position="368"/>
        <end position="381"/>
    </location>
</feature>
<feature type="strand" evidence="4">
    <location>
        <begin position="390"/>
        <end position="406"/>
    </location>
</feature>
<accession>Q64762</accession>
<organismHost>
    <name type="scientific">Galliformes</name>
    <dbReference type="NCBI Taxonomy" id="8976"/>
</organismHost>
<evidence type="ECO:0000250" key="1"/>
<evidence type="ECO:0000256" key="2">
    <source>
        <dbReference type="SAM" id="MobiDB-lite"/>
    </source>
</evidence>
<evidence type="ECO:0000305" key="3"/>
<evidence type="ECO:0007829" key="4">
    <source>
        <dbReference type="PDB" id="2VTW"/>
    </source>
</evidence>
<proteinExistence type="evidence at protein level"/>